<reference key="1">
    <citation type="journal article" date="2009" name="PLoS Genet.">
        <title>Organised genome dynamics in the Escherichia coli species results in highly diverse adaptive paths.</title>
        <authorList>
            <person name="Touchon M."/>
            <person name="Hoede C."/>
            <person name="Tenaillon O."/>
            <person name="Barbe V."/>
            <person name="Baeriswyl S."/>
            <person name="Bidet P."/>
            <person name="Bingen E."/>
            <person name="Bonacorsi S."/>
            <person name="Bouchier C."/>
            <person name="Bouvet O."/>
            <person name="Calteau A."/>
            <person name="Chiapello H."/>
            <person name="Clermont O."/>
            <person name="Cruveiller S."/>
            <person name="Danchin A."/>
            <person name="Diard M."/>
            <person name="Dossat C."/>
            <person name="Karoui M.E."/>
            <person name="Frapy E."/>
            <person name="Garry L."/>
            <person name="Ghigo J.M."/>
            <person name="Gilles A.M."/>
            <person name="Johnson J."/>
            <person name="Le Bouguenec C."/>
            <person name="Lescat M."/>
            <person name="Mangenot S."/>
            <person name="Martinez-Jehanne V."/>
            <person name="Matic I."/>
            <person name="Nassif X."/>
            <person name="Oztas S."/>
            <person name="Petit M.A."/>
            <person name="Pichon C."/>
            <person name="Rouy Z."/>
            <person name="Ruf C.S."/>
            <person name="Schneider D."/>
            <person name="Tourret J."/>
            <person name="Vacherie B."/>
            <person name="Vallenet D."/>
            <person name="Medigue C."/>
            <person name="Rocha E.P.C."/>
            <person name="Denamur E."/>
        </authorList>
    </citation>
    <scope>NUCLEOTIDE SEQUENCE [LARGE SCALE GENOMIC DNA]</scope>
    <source>
        <strain>ED1a</strain>
    </source>
</reference>
<proteinExistence type="inferred from homology"/>
<dbReference type="EMBL" id="CU928162">
    <property type="protein sequence ID" value="CAR10566.1"/>
    <property type="molecule type" value="Genomic_DNA"/>
</dbReference>
<dbReference type="RefSeq" id="WP_000027720.1">
    <property type="nucleotide sequence ID" value="NC_011745.1"/>
</dbReference>
<dbReference type="SMR" id="B7MQY5"/>
<dbReference type="KEGG" id="ecq:ECED1_4594"/>
<dbReference type="HOGENOM" id="CLU_055275_0_0_6"/>
<dbReference type="Proteomes" id="UP000000748">
    <property type="component" value="Chromosome"/>
</dbReference>
<dbReference type="GO" id="GO:0005829">
    <property type="term" value="C:cytosol"/>
    <property type="evidence" value="ECO:0007669"/>
    <property type="project" value="TreeGrafter"/>
</dbReference>
<dbReference type="GO" id="GO:0008199">
    <property type="term" value="F:ferric iron binding"/>
    <property type="evidence" value="ECO:0007669"/>
    <property type="project" value="TreeGrafter"/>
</dbReference>
<dbReference type="GO" id="GO:0051604">
    <property type="term" value="P:protein maturation"/>
    <property type="evidence" value="ECO:0007669"/>
    <property type="project" value="TreeGrafter"/>
</dbReference>
<dbReference type="CDD" id="cd16341">
    <property type="entry name" value="FdhE"/>
    <property type="match status" value="1"/>
</dbReference>
<dbReference type="FunFam" id="3.90.1670.10:FF:000001">
    <property type="entry name" value="Protein FdhE"/>
    <property type="match status" value="1"/>
</dbReference>
<dbReference type="Gene3D" id="3.90.1670.10">
    <property type="entry name" value="FdhE-like domain"/>
    <property type="match status" value="1"/>
</dbReference>
<dbReference type="HAMAP" id="MF_00611">
    <property type="entry name" value="FdeH"/>
    <property type="match status" value="1"/>
</dbReference>
<dbReference type="InterPro" id="IPR024064">
    <property type="entry name" value="FdhE-like_sf"/>
</dbReference>
<dbReference type="InterPro" id="IPR056796">
    <property type="entry name" value="FdhE_C"/>
</dbReference>
<dbReference type="InterPro" id="IPR056797">
    <property type="entry name" value="FdhE_central"/>
</dbReference>
<dbReference type="InterPro" id="IPR056774">
    <property type="entry name" value="FdhE_N"/>
</dbReference>
<dbReference type="InterPro" id="IPR006452">
    <property type="entry name" value="Formate_DH_accessory"/>
</dbReference>
<dbReference type="NCBIfam" id="TIGR01562">
    <property type="entry name" value="FdhE"/>
    <property type="match status" value="1"/>
</dbReference>
<dbReference type="NCBIfam" id="NF002925">
    <property type="entry name" value="PRK03564.1"/>
    <property type="match status" value="1"/>
</dbReference>
<dbReference type="PANTHER" id="PTHR37689">
    <property type="entry name" value="PROTEIN FDHE"/>
    <property type="match status" value="1"/>
</dbReference>
<dbReference type="PANTHER" id="PTHR37689:SF1">
    <property type="entry name" value="PROTEIN FDHE"/>
    <property type="match status" value="1"/>
</dbReference>
<dbReference type="Pfam" id="PF24860">
    <property type="entry name" value="FdhE_C"/>
    <property type="match status" value="1"/>
</dbReference>
<dbReference type="Pfam" id="PF24859">
    <property type="entry name" value="FdhE_central"/>
    <property type="match status" value="1"/>
</dbReference>
<dbReference type="Pfam" id="PF04216">
    <property type="entry name" value="FdhE_N"/>
    <property type="match status" value="1"/>
</dbReference>
<dbReference type="PIRSF" id="PIRSF018296">
    <property type="entry name" value="Format_dh_formtn"/>
    <property type="match status" value="1"/>
</dbReference>
<dbReference type="SUPFAM" id="SSF144020">
    <property type="entry name" value="FdhE-like"/>
    <property type="match status" value="1"/>
</dbReference>
<name>FDHE_ECO81</name>
<feature type="chain" id="PRO_1000147169" description="Protein FdhE">
    <location>
        <begin position="1"/>
        <end position="309"/>
    </location>
</feature>
<gene>
    <name evidence="1" type="primary">fdhE</name>
    <name type="ordered locus">ECED1_4594</name>
</gene>
<comment type="function">
    <text evidence="1">Necessary for formate dehydrogenase activity.</text>
</comment>
<comment type="subcellular location">
    <subcellularLocation>
        <location evidence="1">Cytoplasm</location>
    </subcellularLocation>
</comment>
<comment type="similarity">
    <text evidence="1">Belongs to the FdhE family.</text>
</comment>
<organism>
    <name type="scientific">Escherichia coli O81 (strain ED1a)</name>
    <dbReference type="NCBI Taxonomy" id="585397"/>
    <lineage>
        <taxon>Bacteria</taxon>
        <taxon>Pseudomonadati</taxon>
        <taxon>Pseudomonadota</taxon>
        <taxon>Gammaproteobacteria</taxon>
        <taxon>Enterobacterales</taxon>
        <taxon>Enterobacteriaceae</taxon>
        <taxon>Escherichia</taxon>
    </lineage>
</organism>
<accession>B7MQY5</accession>
<protein>
    <recommendedName>
        <fullName evidence="1">Protein FdhE</fullName>
    </recommendedName>
</protein>
<keyword id="KW-0963">Cytoplasm</keyword>
<sequence>MSIRIIPQDELGSSEKRTADMIPPLLFPRLKNLYNRRAERLRELAENNPLGDYLRFAALIAHAQEVVLYDHPLEMDLTTRIKEASAQGKPPLDIHVLPRDKHWQKLLMALIAELKPEMSGPALAVIENLEKASTQELEDMASALFASDFSSVSSDKAPFIWAALSLYWAQMANLIPGKARAEYGEQRQYCPVCGSMPVSSMVQIGTTQGLRYLHCNLCETEWHVVRVKCSNCEQSGKLHYWSLDDEQAAIKAESCDDCGTYLKILYQEKEPKVEAVADDLASLVLDARMEQEGYARSSINPFLFPGEGE</sequence>
<evidence type="ECO:0000255" key="1">
    <source>
        <dbReference type="HAMAP-Rule" id="MF_00611"/>
    </source>
</evidence>